<gene>
    <name evidence="1" type="primary">psd</name>
    <name type="ordered locus">PputW619_4700</name>
</gene>
<evidence type="ECO:0000255" key="1">
    <source>
        <dbReference type="HAMAP-Rule" id="MF_00662"/>
    </source>
</evidence>
<accession>B1JAE9</accession>
<dbReference type="EC" id="4.1.1.65" evidence="1"/>
<dbReference type="EMBL" id="CP000949">
    <property type="protein sequence ID" value="ACA75177.1"/>
    <property type="molecule type" value="Genomic_DNA"/>
</dbReference>
<dbReference type="SMR" id="B1JAE9"/>
<dbReference type="STRING" id="390235.PputW619_4700"/>
<dbReference type="KEGG" id="ppw:PputW619_4700"/>
<dbReference type="eggNOG" id="COG0688">
    <property type="taxonomic scope" value="Bacteria"/>
</dbReference>
<dbReference type="HOGENOM" id="CLU_029061_4_1_6"/>
<dbReference type="OrthoDB" id="9802030at2"/>
<dbReference type="UniPathway" id="UPA00558">
    <property type="reaction ID" value="UER00616"/>
</dbReference>
<dbReference type="GO" id="GO:0005886">
    <property type="term" value="C:plasma membrane"/>
    <property type="evidence" value="ECO:0007669"/>
    <property type="project" value="UniProtKB-SubCell"/>
</dbReference>
<dbReference type="GO" id="GO:0004609">
    <property type="term" value="F:phosphatidylserine decarboxylase activity"/>
    <property type="evidence" value="ECO:0007669"/>
    <property type="project" value="UniProtKB-UniRule"/>
</dbReference>
<dbReference type="GO" id="GO:0006646">
    <property type="term" value="P:phosphatidylethanolamine biosynthetic process"/>
    <property type="evidence" value="ECO:0007669"/>
    <property type="project" value="UniProtKB-UniRule"/>
</dbReference>
<dbReference type="HAMAP" id="MF_00662">
    <property type="entry name" value="PS_decarb_PSD_B_type1"/>
    <property type="match status" value="1"/>
</dbReference>
<dbReference type="InterPro" id="IPR003817">
    <property type="entry name" value="PS_Dcarbxylase"/>
</dbReference>
<dbReference type="InterPro" id="IPR033177">
    <property type="entry name" value="PSD-B"/>
</dbReference>
<dbReference type="InterPro" id="IPR033178">
    <property type="entry name" value="PSD_type1_pro"/>
</dbReference>
<dbReference type="NCBIfam" id="TIGR00163">
    <property type="entry name" value="PS_decarb"/>
    <property type="match status" value="1"/>
</dbReference>
<dbReference type="PANTHER" id="PTHR10067">
    <property type="entry name" value="PHOSPHATIDYLSERINE DECARBOXYLASE"/>
    <property type="match status" value="1"/>
</dbReference>
<dbReference type="PANTHER" id="PTHR10067:SF6">
    <property type="entry name" value="PHOSPHATIDYLSERINE DECARBOXYLASE PROENZYME, MITOCHONDRIAL"/>
    <property type="match status" value="1"/>
</dbReference>
<dbReference type="Pfam" id="PF02666">
    <property type="entry name" value="PS_Dcarbxylase"/>
    <property type="match status" value="1"/>
</dbReference>
<name>PSD_PSEPW</name>
<organism>
    <name type="scientific">Pseudomonas putida (strain W619)</name>
    <dbReference type="NCBI Taxonomy" id="390235"/>
    <lineage>
        <taxon>Bacteria</taxon>
        <taxon>Pseudomonadati</taxon>
        <taxon>Pseudomonadota</taxon>
        <taxon>Gammaproteobacteria</taxon>
        <taxon>Pseudomonadales</taxon>
        <taxon>Pseudomonadaceae</taxon>
        <taxon>Pseudomonas</taxon>
    </lineage>
</organism>
<reference key="1">
    <citation type="submission" date="2008-02" db="EMBL/GenBank/DDBJ databases">
        <title>Complete sequence of Pseudomonas putida W619.</title>
        <authorList>
            <person name="Copeland A."/>
            <person name="Lucas S."/>
            <person name="Lapidus A."/>
            <person name="Barry K."/>
            <person name="Detter J.C."/>
            <person name="Glavina del Rio T."/>
            <person name="Dalin E."/>
            <person name="Tice H."/>
            <person name="Pitluck S."/>
            <person name="Chain P."/>
            <person name="Malfatti S."/>
            <person name="Shin M."/>
            <person name="Vergez L."/>
            <person name="Schmutz J."/>
            <person name="Larimer F."/>
            <person name="Land M."/>
            <person name="Hauser L."/>
            <person name="Kyrpides N."/>
            <person name="Kim E."/>
            <person name="Taghavi S."/>
            <person name="Vangronsveld D."/>
            <person name="van der Lelie D."/>
            <person name="Richardson P."/>
        </authorList>
    </citation>
    <scope>NUCLEOTIDE SEQUENCE [LARGE SCALE GENOMIC DNA]</scope>
    <source>
        <strain>W619</strain>
    </source>
</reference>
<comment type="function">
    <text evidence="1">Catalyzes the formation of phosphatidylethanolamine (PtdEtn) from phosphatidylserine (PtdSer).</text>
</comment>
<comment type="catalytic activity">
    <reaction evidence="1">
        <text>a 1,2-diacyl-sn-glycero-3-phospho-L-serine + H(+) = a 1,2-diacyl-sn-glycero-3-phosphoethanolamine + CO2</text>
        <dbReference type="Rhea" id="RHEA:20828"/>
        <dbReference type="ChEBI" id="CHEBI:15378"/>
        <dbReference type="ChEBI" id="CHEBI:16526"/>
        <dbReference type="ChEBI" id="CHEBI:57262"/>
        <dbReference type="ChEBI" id="CHEBI:64612"/>
        <dbReference type="EC" id="4.1.1.65"/>
    </reaction>
</comment>
<comment type="cofactor">
    <cofactor evidence="1">
        <name>pyruvate</name>
        <dbReference type="ChEBI" id="CHEBI:15361"/>
    </cofactor>
    <text evidence="1">Binds 1 pyruvoyl group covalently per subunit.</text>
</comment>
<comment type="pathway">
    <text evidence="1">Phospholipid metabolism; phosphatidylethanolamine biosynthesis; phosphatidylethanolamine from CDP-diacylglycerol: step 2/2.</text>
</comment>
<comment type="subunit">
    <text evidence="1">Heterodimer of a large membrane-associated beta subunit and a small pyruvoyl-containing alpha subunit.</text>
</comment>
<comment type="subcellular location">
    <subcellularLocation>
        <location evidence="1">Cell membrane</location>
        <topology evidence="1">Peripheral membrane protein</topology>
    </subcellularLocation>
</comment>
<comment type="PTM">
    <text evidence="1">Is synthesized initially as an inactive proenzyme. Formation of the active enzyme involves a self-maturation process in which the active site pyruvoyl group is generated from an internal serine residue via an autocatalytic post-translational modification. Two non-identical subunits are generated from the proenzyme in this reaction, and the pyruvate is formed at the N-terminus of the alpha chain, which is derived from the carboxyl end of the proenzyme. The autoendoproteolytic cleavage occurs by a canonical serine protease mechanism, in which the side chain hydroxyl group of the serine supplies its oxygen atom to form the C-terminus of the beta chain, while the remainder of the serine residue undergoes an oxidative deamination to produce ammonia and the pyruvoyl prosthetic group on the alpha chain. During this reaction, the Ser that is part of the protease active site of the proenzyme becomes the pyruvoyl prosthetic group, which constitutes an essential element of the active site of the mature decarboxylase.</text>
</comment>
<comment type="similarity">
    <text evidence="1">Belongs to the phosphatidylserine decarboxylase family. PSD-B subfamily. Prokaryotic type I sub-subfamily.</text>
</comment>
<sequence length="287" mass="31616">MKSRLFIISQYLLPHHLLSRLAGCVAECRARWFKNAFTAWFAKRYQVNMNEALVEDLTAYEHFNAFFTRALKPDARPLDETPGAILCPADGAVSQLGPIEHGRIFQAKGHSFSALELLGGDPALAAPFMGGEFATIYLSPKDYHRVHMPLAGTLREMVYVPGRLFSVNQTTAENVPELFARNERVVCLFDTERGPMAVVLVGAMIVASIETVWAGLVTPPKRELKTFRYDEGSRAPIHLEKGAELGRFKLGSTAIVLFGPEQVKWAETLGAGSATRMGELLAVPVQA</sequence>
<keyword id="KW-1003">Cell membrane</keyword>
<keyword id="KW-0210">Decarboxylase</keyword>
<keyword id="KW-0444">Lipid biosynthesis</keyword>
<keyword id="KW-0443">Lipid metabolism</keyword>
<keyword id="KW-0456">Lyase</keyword>
<keyword id="KW-0472">Membrane</keyword>
<keyword id="KW-0594">Phospholipid biosynthesis</keyword>
<keyword id="KW-1208">Phospholipid metabolism</keyword>
<keyword id="KW-0670">Pyruvate</keyword>
<keyword id="KW-0865">Zymogen</keyword>
<protein>
    <recommendedName>
        <fullName evidence="1">Phosphatidylserine decarboxylase proenzyme</fullName>
        <ecNumber evidence="1">4.1.1.65</ecNumber>
    </recommendedName>
    <component>
        <recommendedName>
            <fullName evidence="1">Phosphatidylserine decarboxylase alpha chain</fullName>
        </recommendedName>
    </component>
    <component>
        <recommendedName>
            <fullName evidence="1">Phosphatidylserine decarboxylase beta chain</fullName>
        </recommendedName>
    </component>
</protein>
<proteinExistence type="inferred from homology"/>
<feature type="chain" id="PRO_1000131388" description="Phosphatidylserine decarboxylase beta chain" evidence="1">
    <location>
        <begin position="1"/>
        <end position="251"/>
    </location>
</feature>
<feature type="chain" id="PRO_1000131389" description="Phosphatidylserine decarboxylase alpha chain" evidence="1">
    <location>
        <begin position="252"/>
        <end position="287"/>
    </location>
</feature>
<feature type="active site" description="Charge relay system; for autoendoproteolytic cleavage activity" evidence="1">
    <location>
        <position position="90"/>
    </location>
</feature>
<feature type="active site" description="Charge relay system; for autoendoproteolytic cleavage activity" evidence="1">
    <location>
        <position position="147"/>
    </location>
</feature>
<feature type="active site" description="Charge relay system; for autoendoproteolytic cleavage activity" evidence="1">
    <location>
        <position position="252"/>
    </location>
</feature>
<feature type="active site" description="Schiff-base intermediate with substrate; via pyruvic acid; for decarboxylase activity" evidence="1">
    <location>
        <position position="252"/>
    </location>
</feature>
<feature type="site" description="Cleavage (non-hydrolytic); by autocatalysis" evidence="1">
    <location>
        <begin position="251"/>
        <end position="252"/>
    </location>
</feature>
<feature type="modified residue" description="Pyruvic acid (Ser); by autocatalysis" evidence="1">
    <location>
        <position position="252"/>
    </location>
</feature>